<sequence>MSSVIKTIVVKTLQCTVKCVCVGVRQQYGLLRRHPKTIACALVGGIIAHDVLHLYAAVYRVENPWEFVPTEGPRGVIVLRVYNALRFTAAKWRWNCWTIFGKFPFNSEQFSRIMETSTERKPDLRPLLVPAHETIEVYPCNNIHSHPRSAEFRSSANEYLVRSVRRAGYPPYVVSSSKRDFCDGNRFFYCPKDFGMQFRNDPISNNHALVFTDVDYYANMNRWLQLFLPTCLYTLVPTRLNYSNDEFAYRFENNEIVYNVTGGGEYRHSLWDYKGDTVTVVDEYGNLLIFDIEQRRVQGDEQHRLIWLLPKAKITDPLWIVGPTEWYDKLLVRKTVQQGRLKILWEPIADDLSIGLHGSNYSVSLKGELFEAIRTRISCKDSTPYVSDVERMLREAKHKNFLTDAPILYHCFQDDVIIRPNVVKTGSFPVTYNAIPKKAPSVTEDPKMPGQVVTTPLVSQPALFAGKGFNADKACIEGRIEKVRNVTKFPIKYVRYAAEFVKLVIPETIAGTGVPNSIGMIREEQDKVAQRARFDRVAPIMSTQTENSIKAFIKTEMYAAAKAPRNISTMAPEITIQSSAYSLPMAKIFKKIPWYCPGKNPKEITLRLAEVCLQDPDHELEEGDYTCMDGTQSPDYSDLLLLPIYMRYFAKQYRGQFKNLYNQIYKQRATTSSGVPYNPEMTIRSGSSITTHAGTLNNAFNIYAALRDMGYDETTAWDKVGAVFGDDSLNANHQGEFHSYIEHVTKVLGMRYKSNLRERGQPVLFLGRYFVDPITSYDSFADPMRTIGKLHATANKNVSVEQGAANKAHGYITTDSKTPIIGAWARRVLEITKKKFKNGTGEEQYRCSNAWPQKDEAAIRAAMAAVLEVDEAQLIAQNEAVLKVNSLDQFPVVFDTYYDHKQLAEVDGQLVGTDLHIKEEDERQPETSIDSVPSTGPPPSNGDPNAGGKPTDGPSKGKRKVKGRRPRTAGDPATLRLTDAGSSRRVKPPRKLRPEAKRGGRPIETLVFKNSSLS</sequence>
<dbReference type="EC" id="2.7.7.48"/>
<dbReference type="EMBL" id="AY962576">
    <property type="protein sequence ID" value="AAY27743.1"/>
    <property type="molecule type" value="Genomic_RNA"/>
</dbReference>
<dbReference type="SMR" id="Q3KSM3"/>
<dbReference type="GO" id="GO:0003723">
    <property type="term" value="F:RNA binding"/>
    <property type="evidence" value="ECO:0007669"/>
    <property type="project" value="InterPro"/>
</dbReference>
<dbReference type="GO" id="GO:0003968">
    <property type="term" value="F:RNA-directed RNA polymerase activity"/>
    <property type="evidence" value="ECO:0007669"/>
    <property type="project" value="UniProtKB-KW"/>
</dbReference>
<dbReference type="GO" id="GO:0006351">
    <property type="term" value="P:DNA-templated transcription"/>
    <property type="evidence" value="ECO:0007669"/>
    <property type="project" value="InterPro"/>
</dbReference>
<dbReference type="GO" id="GO:0039694">
    <property type="term" value="P:viral RNA genome replication"/>
    <property type="evidence" value="ECO:0007669"/>
    <property type="project" value="InterPro"/>
</dbReference>
<dbReference type="CDD" id="cd23173">
    <property type="entry name" value="ps-ssRNAv_Nodaviridae_RdRp"/>
    <property type="match status" value="1"/>
</dbReference>
<dbReference type="InterPro" id="IPR043502">
    <property type="entry name" value="DNA/RNA_pol_sf"/>
</dbReference>
<dbReference type="InterPro" id="IPR043647">
    <property type="entry name" value="Noda_Vmethyltr_dom"/>
</dbReference>
<dbReference type="InterPro" id="IPR001205">
    <property type="entry name" value="RNA-dir_pol_C"/>
</dbReference>
<dbReference type="InterPro" id="IPR007094">
    <property type="entry name" value="RNA-dir_pol_PSvirus"/>
</dbReference>
<dbReference type="Pfam" id="PF19222">
    <property type="entry name" value="Noda_Vmethyltr"/>
    <property type="match status" value="1"/>
</dbReference>
<dbReference type="Pfam" id="PF00680">
    <property type="entry name" value="RdRP_1"/>
    <property type="match status" value="1"/>
</dbReference>
<dbReference type="SUPFAM" id="SSF56672">
    <property type="entry name" value="DNA/RNA polymerases"/>
    <property type="match status" value="1"/>
</dbReference>
<dbReference type="PROSITE" id="PS50507">
    <property type="entry name" value="RDRP_SSRNA_POS"/>
    <property type="match status" value="1"/>
</dbReference>
<name>RDRP_PRV</name>
<feature type="chain" id="PRO_0000223688" description="RNA-directed RNA polymerase">
    <location>
        <begin position="1"/>
        <end position="1014"/>
    </location>
</feature>
<feature type="domain" description="RdRp catalytic" evidence="1">
    <location>
        <begin position="618"/>
        <end position="740"/>
    </location>
</feature>
<feature type="region of interest" description="Disordered" evidence="2">
    <location>
        <begin position="918"/>
        <end position="1014"/>
    </location>
</feature>
<feature type="compositionally biased region" description="Basic residues" evidence="2">
    <location>
        <begin position="956"/>
        <end position="967"/>
    </location>
</feature>
<evidence type="ECO:0000255" key="1">
    <source>
        <dbReference type="PROSITE-ProRule" id="PRU00539"/>
    </source>
</evidence>
<evidence type="ECO:0000256" key="2">
    <source>
        <dbReference type="SAM" id="MobiDB-lite"/>
    </source>
</evidence>
<evidence type="ECO:0000305" key="3"/>
<proteinExistence type="inferred from homology"/>
<organismHost>
    <name type="scientific">Pieris rapae</name>
    <name type="common">Small white butterfly</name>
    <name type="synonym">Artogeia rapae</name>
    <dbReference type="NCBI Taxonomy" id="64459"/>
</organismHost>
<reference key="1">
    <citation type="submission" date="2005-03" db="EMBL/GenBank/DDBJ databases">
        <title>Sequence of the non-structural protein gene encoded by RNA1 of a new alpha noda-like virus isolated from Pieris rapae larvae in China.</title>
        <authorList>
            <person name="Liu C."/>
            <person name="Zhang J."/>
            <person name="Yi F."/>
            <person name="Wang J."/>
            <person name="Wang X."/>
            <person name="Hu Y."/>
        </authorList>
    </citation>
    <scope>NUCLEOTIDE SEQUENCE [GENOMIC DNA]</scope>
</reference>
<organism>
    <name type="scientific">Pieris rapae virus</name>
    <dbReference type="NCBI Taxonomy" id="327392"/>
    <lineage>
        <taxon>Viruses</taxon>
        <taxon>Riboviria</taxon>
        <taxon>Orthornavirae</taxon>
        <taxon>Kitrinoviricota</taxon>
        <taxon>Magsaviricetes</taxon>
        <taxon>Nodamuvirales</taxon>
        <taxon>Nodaviridae</taxon>
    </lineage>
</organism>
<accession>Q3KSM3</accession>
<comment type="function">
    <text evidence="3">RNA-dependent RNA polymerase which replicates the viral genome composed of 2 RNA segments, RNA1 and RNA2.</text>
</comment>
<comment type="catalytic activity">
    <reaction evidence="1">
        <text>RNA(n) + a ribonucleoside 5'-triphosphate = RNA(n+1) + diphosphate</text>
        <dbReference type="Rhea" id="RHEA:21248"/>
        <dbReference type="Rhea" id="RHEA-COMP:14527"/>
        <dbReference type="Rhea" id="RHEA-COMP:17342"/>
        <dbReference type="ChEBI" id="CHEBI:33019"/>
        <dbReference type="ChEBI" id="CHEBI:61557"/>
        <dbReference type="ChEBI" id="CHEBI:140395"/>
        <dbReference type="EC" id="2.7.7.48"/>
    </reaction>
</comment>
<comment type="similarity">
    <text evidence="3">Belongs to the nodaviridae RNA polymerase family.</text>
</comment>
<keyword id="KW-0548">Nucleotidyltransferase</keyword>
<keyword id="KW-0696">RNA-directed RNA polymerase</keyword>
<keyword id="KW-0808">Transferase</keyword>
<keyword id="KW-0693">Viral RNA replication</keyword>
<protein>
    <recommendedName>
        <fullName>RNA-directed RNA polymerase</fullName>
        <shortName>RdRp</shortName>
        <ecNumber>2.7.7.48</ecNumber>
    </recommendedName>
    <alternativeName>
        <fullName>RNA replicase</fullName>
    </alternativeName>
</protein>